<name>CALYP_DROPS</name>
<organism>
    <name type="scientific">Drosophila pseudoobscura pseudoobscura</name>
    <name type="common">Fruit fly</name>
    <dbReference type="NCBI Taxonomy" id="46245"/>
    <lineage>
        <taxon>Eukaryota</taxon>
        <taxon>Metazoa</taxon>
        <taxon>Ecdysozoa</taxon>
        <taxon>Arthropoda</taxon>
        <taxon>Hexapoda</taxon>
        <taxon>Insecta</taxon>
        <taxon>Pterygota</taxon>
        <taxon>Neoptera</taxon>
        <taxon>Endopterygota</taxon>
        <taxon>Diptera</taxon>
        <taxon>Brachycera</taxon>
        <taxon>Muscomorpha</taxon>
        <taxon>Ephydroidea</taxon>
        <taxon>Drosophilidae</taxon>
        <taxon>Drosophila</taxon>
        <taxon>Sophophora</taxon>
    </lineage>
</organism>
<reference key="1">
    <citation type="journal article" date="2005" name="Genome Res.">
        <title>Comparative genome sequencing of Drosophila pseudoobscura: chromosomal, gene, and cis-element evolution.</title>
        <authorList>
            <person name="Richards S."/>
            <person name="Liu Y."/>
            <person name="Bettencourt B.R."/>
            <person name="Hradecky P."/>
            <person name="Letovsky S."/>
            <person name="Nielsen R."/>
            <person name="Thornton K."/>
            <person name="Hubisz M.J."/>
            <person name="Chen R."/>
            <person name="Meisel R.P."/>
            <person name="Couronne O."/>
            <person name="Hua S."/>
            <person name="Smith M.A."/>
            <person name="Zhang P."/>
            <person name="Liu J."/>
            <person name="Bussemaker H.J."/>
            <person name="van Batenburg M.F."/>
            <person name="Howells S.L."/>
            <person name="Scherer S.E."/>
            <person name="Sodergren E."/>
            <person name="Matthews B.B."/>
            <person name="Crosby M.A."/>
            <person name="Schroeder A.J."/>
            <person name="Ortiz-Barrientos D."/>
            <person name="Rives C.M."/>
            <person name="Metzker M.L."/>
            <person name="Muzny D.M."/>
            <person name="Scott G."/>
            <person name="Steffen D."/>
            <person name="Wheeler D.A."/>
            <person name="Worley K.C."/>
            <person name="Havlak P."/>
            <person name="Durbin K.J."/>
            <person name="Egan A."/>
            <person name="Gill R."/>
            <person name="Hume J."/>
            <person name="Morgan M.B."/>
            <person name="Miner G."/>
            <person name="Hamilton C."/>
            <person name="Huang Y."/>
            <person name="Waldron L."/>
            <person name="Verduzco D."/>
            <person name="Clerc-Blankenburg K.P."/>
            <person name="Dubchak I."/>
            <person name="Noor M.A.F."/>
            <person name="Anderson W."/>
            <person name="White K.P."/>
            <person name="Clark A.G."/>
            <person name="Schaeffer S.W."/>
            <person name="Gelbart W.M."/>
            <person name="Weinstock G.M."/>
            <person name="Gibbs R.A."/>
        </authorList>
    </citation>
    <scope>NUCLEOTIDE SEQUENCE [LARGE SCALE GENOMIC DNA]</scope>
    <source>
        <strain>MV2-25 / Tucson 14011-0121.94</strain>
    </source>
</reference>
<feature type="chain" id="PRO_0000395831" description="Ubiquitin carboxyl-terminal hydrolase calypso">
    <location>
        <begin position="1"/>
        <end position="475"/>
    </location>
</feature>
<feature type="domain" description="UCH catalytic" evidence="3">
    <location>
        <begin position="44"/>
        <end position="275"/>
    </location>
</feature>
<feature type="domain" description="ULD" evidence="4">
    <location>
        <begin position="374"/>
        <end position="402"/>
    </location>
</feature>
<feature type="region of interest" description="Positively charged C-terminal tail required for binding nucleosomes" evidence="1">
    <location>
        <begin position="404"/>
        <end position="475"/>
    </location>
</feature>
<feature type="region of interest" description="Disordered" evidence="5">
    <location>
        <begin position="411"/>
        <end position="475"/>
    </location>
</feature>
<feature type="coiled-coil region" evidence="2">
    <location>
        <begin position="333"/>
        <end position="360"/>
    </location>
</feature>
<feature type="compositionally biased region" description="Low complexity" evidence="5">
    <location>
        <begin position="419"/>
        <end position="460"/>
    </location>
</feature>
<feature type="compositionally biased region" description="Basic residues" evidence="5">
    <location>
        <begin position="461"/>
        <end position="475"/>
    </location>
</feature>
<feature type="active site" description="Nucleophile" evidence="3">
    <location>
        <position position="130"/>
    </location>
</feature>
<feature type="active site" description="Proton donor" evidence="3">
    <location>
        <position position="212"/>
    </location>
</feature>
<feature type="site" description="Transition state stabilizer" evidence="3">
    <location>
        <position position="124"/>
    </location>
</feature>
<feature type="site" description="Important for enzyme activity" evidence="3">
    <location>
        <position position="227"/>
    </location>
</feature>
<accession>Q291J4</accession>
<sequence length="475" mass="52100">MNVAAGGPGTASASTTAANSIFNNSLLASATGATTMPMAQLADGWLELESDPGLFTLLLEDFGCHDVQVEEVYDLQKPIESPYGFIFLFRWIEERRARRKIVETTAEIFVKDEEAISSIFFAQQVVPNSCATHALLSVLLNCNENNLQLGDTLSRLKVHTKGMSPENKGLAIGNTPELACAHNSHAIPQARRRLERTGAGVASCRFTGEAFHFVSFVPISGQLFELDGLKPYPMNHGGWEDHEDWTDKFRRVMAERLGIATGEQDIRFNLMAVVPDRRIAITHKLKMLRTNQAIVSGTLQKLLKADEQGESGNGDQQRPDTPTTLLEPSAFTAKDLQLLLKNLDTEIAINEQNLADENDRRHMFKVDASRRTHNYDKFICTFLSMLAHQGVLGELVSQHLLPSKKVSGQSAANRISKQNSAASSAGANAGAAAGVTPKSQQQQQQPQTAASKNGKSPGKTPGRRRKGRNKCRKRK</sequence>
<proteinExistence type="inferred from homology"/>
<comment type="function">
    <text evidence="1">Catalytic component of the polycomb repressive deubiquitinase (PR-DUB) complex, a complex that specifically mediates deubiquitination of histone H2A monoubiquitinated at 'Lys-119' (H2AK118ub1). Mediates bisymmetric organization of the PR-DUB complex and is involved in association with nucleosomes to mediate deubiquitination. Does not deubiquitinate monoubiquitinated histone H2B. Required to maintain the transcriptionally repressive state of homeotic genes throughout development. The PR-DUB complex has weak or no activity toward 'Lys-48'- and 'Lys-63'-linked polyubiquitin chains. Polycomb group (PcG) protein.</text>
</comment>
<comment type="catalytic activity">
    <reaction evidence="1">
        <text>Thiol-dependent hydrolysis of ester, thioester, amide, peptide and isopeptide bonds formed by the C-terminal Gly of ubiquitin (a 76-residue protein attached to proteins as an intracellular targeting signal).</text>
        <dbReference type="EC" id="3.4.19.12"/>
    </reaction>
</comment>
<comment type="subunit">
    <text evidence="1">Catalytic component of the polycomb repressive deubiquitinase (PR-DUB) complex, at least composed of caly/calypso, Asx and sba (MBD5/6 homolog). The PR-DUB complex associates with nucleosomes to mediate deubiquitination of histone H2AK118ub1 substrates; the association requires the positively charged C-terminal tail of caly, probably due to direct binding of DNA. Interacts (via ULD domain) with Asx (via DEUBAD domain); the interaction produces a stable heterodimer with a composite binding site for ubiquitin. Homodimerizes (via coiled-coil hinge-region between the UCH and ULD domains) to mediate assembly of 2 copies of the caly-Asx heterodimer into a bisymmetric tetramer; dimerization enhances PR-DUB association with nucleosomes.</text>
</comment>
<comment type="subcellular location">
    <subcellularLocation>
        <location evidence="1">Nucleus</location>
    </subcellularLocation>
    <text evidence="1">Localizes to PcG response elements (PREs).</text>
</comment>
<comment type="similarity">
    <text evidence="6">Belongs to the peptidase C12 family. BAP1 subfamily.</text>
</comment>
<dbReference type="EC" id="3.4.19.12" evidence="1"/>
<dbReference type="EMBL" id="CM000071">
    <property type="protein sequence ID" value="EAL25118.1"/>
    <property type="molecule type" value="Genomic_DNA"/>
</dbReference>
<dbReference type="RefSeq" id="XP_001360543.1">
    <property type="nucleotide sequence ID" value="XM_001360506.3"/>
</dbReference>
<dbReference type="SMR" id="Q291J4"/>
<dbReference type="FunCoup" id="Q291J4">
    <property type="interactions" value="1283"/>
</dbReference>
<dbReference type="STRING" id="46245.Q291J4"/>
<dbReference type="MEROPS" id="C12.A09"/>
<dbReference type="EnsemblMetazoa" id="FBtr0278406">
    <property type="protein sequence ID" value="FBpp0276844"/>
    <property type="gene ID" value="FBgn0081072"/>
</dbReference>
<dbReference type="GeneID" id="4803898"/>
<dbReference type="KEGG" id="dpo:4803898"/>
<dbReference type="CTD" id="50632"/>
<dbReference type="eggNOG" id="KOG2778">
    <property type="taxonomic scope" value="Eukaryota"/>
</dbReference>
<dbReference type="HOGENOM" id="CLU_018316_2_1_1"/>
<dbReference type="InParanoid" id="Q291J4"/>
<dbReference type="OMA" id="MNHGCWE"/>
<dbReference type="PhylomeDB" id="Q291J4"/>
<dbReference type="Proteomes" id="UP000001819">
    <property type="component" value="Chromosome 3"/>
</dbReference>
<dbReference type="Bgee" id="FBgn0081072">
    <property type="expression patterns" value="Expressed in female reproductive system and 2 other cell types or tissues"/>
</dbReference>
<dbReference type="GO" id="GO:0000785">
    <property type="term" value="C:chromatin"/>
    <property type="evidence" value="ECO:0000250"/>
    <property type="project" value="UniProtKB"/>
</dbReference>
<dbReference type="GO" id="GO:0005737">
    <property type="term" value="C:cytoplasm"/>
    <property type="evidence" value="ECO:0007669"/>
    <property type="project" value="TreeGrafter"/>
</dbReference>
<dbReference type="GO" id="GO:0035517">
    <property type="term" value="C:PR-DUB complex"/>
    <property type="evidence" value="ECO:0000250"/>
    <property type="project" value="UniProtKB"/>
</dbReference>
<dbReference type="GO" id="GO:0003682">
    <property type="term" value="F:chromatin binding"/>
    <property type="evidence" value="ECO:0000250"/>
    <property type="project" value="UniProtKB"/>
</dbReference>
<dbReference type="GO" id="GO:0004843">
    <property type="term" value="F:cysteine-type deubiquitinase activity"/>
    <property type="evidence" value="ECO:0000250"/>
    <property type="project" value="UniProtKB"/>
</dbReference>
<dbReference type="GO" id="GO:0040029">
    <property type="term" value="P:epigenetic regulation of gene expression"/>
    <property type="evidence" value="ECO:0000250"/>
    <property type="project" value="UniProtKB"/>
</dbReference>
<dbReference type="GO" id="GO:0031507">
    <property type="term" value="P:heterochromatin formation"/>
    <property type="evidence" value="ECO:0000250"/>
    <property type="project" value="UniProtKB"/>
</dbReference>
<dbReference type="GO" id="GO:0016579">
    <property type="term" value="P:protein deubiquitination"/>
    <property type="evidence" value="ECO:0007669"/>
    <property type="project" value="TreeGrafter"/>
</dbReference>
<dbReference type="GO" id="GO:0006511">
    <property type="term" value="P:ubiquitin-dependent protein catabolic process"/>
    <property type="evidence" value="ECO:0007669"/>
    <property type="project" value="InterPro"/>
</dbReference>
<dbReference type="CDD" id="cd09617">
    <property type="entry name" value="Peptidase_C12_UCH37_BAP1"/>
    <property type="match status" value="1"/>
</dbReference>
<dbReference type="FunFam" id="3.40.532.10:FF:000002">
    <property type="entry name" value="Ubiquitin carboxyl-terminal hydrolase"/>
    <property type="match status" value="1"/>
</dbReference>
<dbReference type="FunFam" id="1.20.58.860:FF:000004">
    <property type="entry name" value="Ubiquitin carboxyl-terminal hydrolase calypso"/>
    <property type="match status" value="1"/>
</dbReference>
<dbReference type="Gene3D" id="1.20.58.860">
    <property type="match status" value="1"/>
</dbReference>
<dbReference type="Gene3D" id="3.40.532.10">
    <property type="entry name" value="Peptidase C12, ubiquitin carboxyl-terminal hydrolase"/>
    <property type="match status" value="1"/>
</dbReference>
<dbReference type="InterPro" id="IPR038765">
    <property type="entry name" value="Papain-like_cys_pep_sf"/>
</dbReference>
<dbReference type="InterPro" id="IPR001578">
    <property type="entry name" value="Peptidase_C12_UCH"/>
</dbReference>
<dbReference type="InterPro" id="IPR036959">
    <property type="entry name" value="Peptidase_C12_UCH_sf"/>
</dbReference>
<dbReference type="InterPro" id="IPR041507">
    <property type="entry name" value="UCH_C"/>
</dbReference>
<dbReference type="PANTHER" id="PTHR10589">
    <property type="entry name" value="UBIQUITIN CARBOXYL-TERMINAL HYDROLASE"/>
    <property type="match status" value="1"/>
</dbReference>
<dbReference type="PANTHER" id="PTHR10589:SF28">
    <property type="entry name" value="UBIQUITIN CARBOXYL-TERMINAL HYDROLASE BAP1"/>
    <property type="match status" value="1"/>
</dbReference>
<dbReference type="Pfam" id="PF01088">
    <property type="entry name" value="Peptidase_C12"/>
    <property type="match status" value="1"/>
</dbReference>
<dbReference type="Pfam" id="PF18031">
    <property type="entry name" value="UCH_C"/>
    <property type="match status" value="1"/>
</dbReference>
<dbReference type="PRINTS" id="PR00707">
    <property type="entry name" value="UBCTHYDRLASE"/>
</dbReference>
<dbReference type="SUPFAM" id="SSF54001">
    <property type="entry name" value="Cysteine proteinases"/>
    <property type="match status" value="1"/>
</dbReference>
<dbReference type="PROSITE" id="PS52048">
    <property type="entry name" value="UCH_DOMAIN"/>
    <property type="match status" value="1"/>
</dbReference>
<dbReference type="PROSITE" id="PS52049">
    <property type="entry name" value="ULD"/>
    <property type="match status" value="1"/>
</dbReference>
<protein>
    <recommendedName>
        <fullName evidence="1">Ubiquitin carboxyl-terminal hydrolase calypso</fullName>
        <ecNumber evidence="1">3.4.19.12</ecNumber>
    </recommendedName>
    <alternativeName>
        <fullName evidence="1">BRCA1-associated protein 1 homolog</fullName>
        <shortName evidence="1">BAP1 homolog</shortName>
    </alternativeName>
    <alternativeName>
        <fullName evidence="1">Polycomb group protein calypso</fullName>
    </alternativeName>
</protein>
<evidence type="ECO:0000250" key="1">
    <source>
        <dbReference type="UniProtKB" id="Q7K5N4"/>
    </source>
</evidence>
<evidence type="ECO:0000255" key="2"/>
<evidence type="ECO:0000255" key="3">
    <source>
        <dbReference type="PROSITE-ProRule" id="PRU01393"/>
    </source>
</evidence>
<evidence type="ECO:0000255" key="4">
    <source>
        <dbReference type="PROSITE-ProRule" id="PRU01394"/>
    </source>
</evidence>
<evidence type="ECO:0000256" key="5">
    <source>
        <dbReference type="SAM" id="MobiDB-lite"/>
    </source>
</evidence>
<evidence type="ECO:0000305" key="6"/>
<keyword id="KW-0156">Chromatin regulator</keyword>
<keyword id="KW-0175">Coiled coil</keyword>
<keyword id="KW-0378">Hydrolase</keyword>
<keyword id="KW-0539">Nucleus</keyword>
<keyword id="KW-0645">Protease</keyword>
<keyword id="KW-1185">Reference proteome</keyword>
<keyword id="KW-0788">Thiol protease</keyword>
<keyword id="KW-0833">Ubl conjugation pathway</keyword>
<gene>
    <name evidence="1" type="primary">caly</name>
    <name evidence="1" type="synonym">BAP1</name>
    <name type="ORF">GA21084</name>
</gene>